<evidence type="ECO:0000255" key="1">
    <source>
        <dbReference type="HAMAP-Rule" id="MF_01564"/>
    </source>
</evidence>
<keyword id="KW-0963">Cytoplasm</keyword>
<keyword id="KW-0819">tRNA processing</keyword>
<organism>
    <name type="scientific">Sodalis glossinidius (strain morsitans)</name>
    <dbReference type="NCBI Taxonomy" id="343509"/>
    <lineage>
        <taxon>Bacteria</taxon>
        <taxon>Pseudomonadati</taxon>
        <taxon>Pseudomonadota</taxon>
        <taxon>Gammaproteobacteria</taxon>
        <taxon>Enterobacterales</taxon>
        <taxon>Bruguierivoracaceae</taxon>
        <taxon>Sodalis</taxon>
    </lineage>
</organism>
<dbReference type="EMBL" id="AP008232">
    <property type="protein sequence ID" value="BAE75562.1"/>
    <property type="molecule type" value="Genomic_DNA"/>
</dbReference>
<dbReference type="RefSeq" id="WP_011412095.1">
    <property type="nucleotide sequence ID" value="NC_007712.1"/>
</dbReference>
<dbReference type="SMR" id="Q2NQL3"/>
<dbReference type="STRING" id="343509.SG2287"/>
<dbReference type="KEGG" id="sgl:SG2287"/>
<dbReference type="eggNOG" id="COG2168">
    <property type="taxonomic scope" value="Bacteria"/>
</dbReference>
<dbReference type="HOGENOM" id="CLU_166087_2_1_6"/>
<dbReference type="OrthoDB" id="9795117at2"/>
<dbReference type="Proteomes" id="UP000001932">
    <property type="component" value="Chromosome"/>
</dbReference>
<dbReference type="GO" id="GO:1990228">
    <property type="term" value="C:sulfurtransferase complex"/>
    <property type="evidence" value="ECO:0007669"/>
    <property type="project" value="TreeGrafter"/>
</dbReference>
<dbReference type="GO" id="GO:0002143">
    <property type="term" value="P:tRNA wobble position uridine thiolation"/>
    <property type="evidence" value="ECO:0007669"/>
    <property type="project" value="InterPro"/>
</dbReference>
<dbReference type="Gene3D" id="3.40.1260.10">
    <property type="entry name" value="DsrEFH-like"/>
    <property type="match status" value="1"/>
</dbReference>
<dbReference type="HAMAP" id="MF_01564">
    <property type="entry name" value="Thiourid_synth_B"/>
    <property type="match status" value="1"/>
</dbReference>
<dbReference type="InterPro" id="IPR027396">
    <property type="entry name" value="DsrEFH-like"/>
</dbReference>
<dbReference type="InterPro" id="IPR023526">
    <property type="entry name" value="Sulphur_relay_TusB"/>
</dbReference>
<dbReference type="InterPro" id="IPR007215">
    <property type="entry name" value="Sulphur_relay_TusB/DsrH"/>
</dbReference>
<dbReference type="NCBIfam" id="NF010035">
    <property type="entry name" value="PRK13510.1"/>
    <property type="match status" value="1"/>
</dbReference>
<dbReference type="NCBIfam" id="TIGR03011">
    <property type="entry name" value="sulf_tusB_dsrH"/>
    <property type="match status" value="1"/>
</dbReference>
<dbReference type="PANTHER" id="PTHR37526">
    <property type="entry name" value="PROTEIN TUSB"/>
    <property type="match status" value="1"/>
</dbReference>
<dbReference type="PANTHER" id="PTHR37526:SF1">
    <property type="entry name" value="PROTEIN TUSB"/>
    <property type="match status" value="1"/>
</dbReference>
<dbReference type="Pfam" id="PF04077">
    <property type="entry name" value="DsrH"/>
    <property type="match status" value="1"/>
</dbReference>
<dbReference type="SUPFAM" id="SSF75169">
    <property type="entry name" value="DsrEFH-like"/>
    <property type="match status" value="1"/>
</dbReference>
<protein>
    <recommendedName>
        <fullName evidence="1">Protein TusB</fullName>
    </recommendedName>
    <alternativeName>
        <fullName evidence="1">tRNA 2-thiouridine synthesizing protein B</fullName>
    </alternativeName>
</protein>
<proteinExistence type="inferred from homology"/>
<comment type="function">
    <text evidence="1">Part of a sulfur-relay system required for 2-thiolation of 5-methylaminomethyl-2-thiouridine (mnm(5)s(2)U) at tRNA wobble positions.</text>
</comment>
<comment type="subunit">
    <text evidence="1">Heterohexamer, formed by a dimer of trimers. The hexameric TusBCD complex contains 2 copies each of TusB, TusC and TusD. The TusBCD complex interacts with TusE.</text>
</comment>
<comment type="subcellular location">
    <subcellularLocation>
        <location evidence="1">Cytoplasm</location>
    </subcellularLocation>
</comment>
<comment type="similarity">
    <text evidence="1">Belongs to the DsrH/TusB family.</text>
</comment>
<reference key="1">
    <citation type="journal article" date="2006" name="Genome Res.">
        <title>Massive genome erosion and functional adaptations provide insights into the symbiotic lifestyle of Sodalis glossinidius in the tsetse host.</title>
        <authorList>
            <person name="Toh H."/>
            <person name="Weiss B.L."/>
            <person name="Perkin S.A.H."/>
            <person name="Yamashita A."/>
            <person name="Oshima K."/>
            <person name="Hattori M."/>
            <person name="Aksoy S."/>
        </authorList>
    </citation>
    <scope>NUCLEOTIDE SEQUENCE [LARGE SCALE GENOMIC DNA]</scope>
    <source>
        <strain>morsitans</strain>
    </source>
</reference>
<gene>
    <name evidence="1" type="primary">tusB</name>
    <name type="ordered locus">SG2287</name>
</gene>
<accession>Q2NQL3</accession>
<name>TUSB_SODGM</name>
<feature type="chain" id="PRO_0000234524" description="Protein TusB">
    <location>
        <begin position="1"/>
        <end position="95"/>
    </location>
</feature>
<sequence length="95" mass="10089">MLYTLSRSPYACDLAALLRIAQHGDDLLLLSDGVIAGLTGSPAACALGASPLTLHALENDIVARGLSAHLSPNIAIISYTDFVRLTEKQPQQMAW</sequence>